<protein>
    <recommendedName>
        <fullName evidence="1">Succinyl-diaminopimelate desuccinylase</fullName>
        <shortName evidence="1">SDAP desuccinylase</shortName>
        <ecNumber evidence="1">3.5.1.18</ecNumber>
    </recommendedName>
    <alternativeName>
        <fullName evidence="1">N-succinyl-LL-2,6-diaminoheptanedioate amidohydrolase</fullName>
    </alternativeName>
</protein>
<sequence length="365" mass="40603">MNAKEFLIELLKFKSVTPNDDGALNFIAMELSDFEAFFIEKEGIKNLLLTKKFKDEGEHLAFGGHVDVVPAGEGWSSDAFVPMEKESFIYARGAQDMKSGVAAFVDALKNADFKGARLSLILTSDEEGEAIYGTKAVLEWMQKRDMLPDYAVVAEPTCVKKIGDSIKIGRRGSINGKLLIRGKQGHVAYPEKCINPVHDFAPVLKLLAGFDLDPGSAEFSPSKIVVTDIRGGIEVCNVTPNDLKLMFNVRNSPDTSLEDVKSYVEKICHGLNYELELKQSSEAFLTNIDNKIVQKMNESVQKITHEVPELNTKGGTSDARYFAKYGVKVVEFGVCNDRIHAIDERVSIEEFEKLCLVFKDLIENF</sequence>
<accession>A7H2V9</accession>
<comment type="function">
    <text evidence="1">Catalyzes the hydrolysis of N-succinyl-L,L-diaminopimelic acid (SDAP), forming succinate and LL-2,6-diaminopimelate (DAP), an intermediate involved in the bacterial biosynthesis of lysine and meso-diaminopimelic acid, an essential component of bacterial cell walls.</text>
</comment>
<comment type="catalytic activity">
    <reaction evidence="1">
        <text>N-succinyl-(2S,6S)-2,6-diaminopimelate + H2O = (2S,6S)-2,6-diaminopimelate + succinate</text>
        <dbReference type="Rhea" id="RHEA:22608"/>
        <dbReference type="ChEBI" id="CHEBI:15377"/>
        <dbReference type="ChEBI" id="CHEBI:30031"/>
        <dbReference type="ChEBI" id="CHEBI:57609"/>
        <dbReference type="ChEBI" id="CHEBI:58087"/>
        <dbReference type="EC" id="3.5.1.18"/>
    </reaction>
</comment>
<comment type="cofactor">
    <cofactor evidence="1">
        <name>Zn(2+)</name>
        <dbReference type="ChEBI" id="CHEBI:29105"/>
    </cofactor>
    <cofactor evidence="1">
        <name>Co(2+)</name>
        <dbReference type="ChEBI" id="CHEBI:48828"/>
    </cofactor>
    <text evidence="1">Binds 2 Zn(2+) or Co(2+) ions per subunit.</text>
</comment>
<comment type="pathway">
    <text evidence="1">Amino-acid biosynthesis; L-lysine biosynthesis via DAP pathway; LL-2,6-diaminopimelate from (S)-tetrahydrodipicolinate (succinylase route): step 3/3.</text>
</comment>
<comment type="subunit">
    <text evidence="1">Homodimer.</text>
</comment>
<comment type="similarity">
    <text evidence="1">Belongs to the peptidase M20A family. DapE subfamily.</text>
</comment>
<gene>
    <name evidence="1" type="primary">dapE</name>
    <name type="ordered locus">JJD26997_0688</name>
</gene>
<name>DAPE_CAMJD</name>
<proteinExistence type="inferred from homology"/>
<dbReference type="EC" id="3.5.1.18" evidence="1"/>
<dbReference type="EMBL" id="CP000768">
    <property type="protein sequence ID" value="ABS44439.1"/>
    <property type="molecule type" value="Genomic_DNA"/>
</dbReference>
<dbReference type="SMR" id="A7H2V9"/>
<dbReference type="KEGG" id="cjd:JJD26997_0688"/>
<dbReference type="HOGENOM" id="CLU_021802_4_0_7"/>
<dbReference type="UniPathway" id="UPA00034">
    <property type="reaction ID" value="UER00021"/>
</dbReference>
<dbReference type="Proteomes" id="UP000002302">
    <property type="component" value="Chromosome"/>
</dbReference>
<dbReference type="GO" id="GO:0008777">
    <property type="term" value="F:acetylornithine deacetylase activity"/>
    <property type="evidence" value="ECO:0007669"/>
    <property type="project" value="TreeGrafter"/>
</dbReference>
<dbReference type="GO" id="GO:0046872">
    <property type="term" value="F:metal ion binding"/>
    <property type="evidence" value="ECO:0007669"/>
    <property type="project" value="UniProtKB-KW"/>
</dbReference>
<dbReference type="GO" id="GO:0009014">
    <property type="term" value="F:succinyl-diaminopimelate desuccinylase activity"/>
    <property type="evidence" value="ECO:0007669"/>
    <property type="project" value="UniProtKB-EC"/>
</dbReference>
<dbReference type="GO" id="GO:0019877">
    <property type="term" value="P:diaminopimelate biosynthetic process"/>
    <property type="evidence" value="ECO:0007669"/>
    <property type="project" value="UniProtKB-KW"/>
</dbReference>
<dbReference type="GO" id="GO:0006526">
    <property type="term" value="P:L-arginine biosynthetic process"/>
    <property type="evidence" value="ECO:0007669"/>
    <property type="project" value="TreeGrafter"/>
</dbReference>
<dbReference type="GO" id="GO:0009089">
    <property type="term" value="P:lysine biosynthetic process via diaminopimelate"/>
    <property type="evidence" value="ECO:0007669"/>
    <property type="project" value="UniProtKB-UniPathway"/>
</dbReference>
<dbReference type="CDD" id="cd03891">
    <property type="entry name" value="M20_DapE_proteobac"/>
    <property type="match status" value="1"/>
</dbReference>
<dbReference type="Gene3D" id="1.10.150.900">
    <property type="match status" value="1"/>
</dbReference>
<dbReference type="Gene3D" id="3.30.70.360">
    <property type="match status" value="1"/>
</dbReference>
<dbReference type="Gene3D" id="3.40.630.10">
    <property type="entry name" value="Zn peptidases"/>
    <property type="match status" value="1"/>
</dbReference>
<dbReference type="HAMAP" id="MF_01690">
    <property type="entry name" value="DapE"/>
    <property type="match status" value="1"/>
</dbReference>
<dbReference type="InterPro" id="IPR001261">
    <property type="entry name" value="ArgE/DapE_CS"/>
</dbReference>
<dbReference type="InterPro" id="IPR036264">
    <property type="entry name" value="Bact_exopeptidase_dim_dom"/>
</dbReference>
<dbReference type="InterPro" id="IPR005941">
    <property type="entry name" value="DapE_proteobac"/>
</dbReference>
<dbReference type="InterPro" id="IPR002933">
    <property type="entry name" value="Peptidase_M20"/>
</dbReference>
<dbReference type="InterPro" id="IPR011650">
    <property type="entry name" value="Peptidase_M20_dimer"/>
</dbReference>
<dbReference type="InterPro" id="IPR050072">
    <property type="entry name" value="Peptidase_M20A"/>
</dbReference>
<dbReference type="NCBIfam" id="TIGR01246">
    <property type="entry name" value="dapE_proteo"/>
    <property type="match status" value="1"/>
</dbReference>
<dbReference type="NCBIfam" id="NF009557">
    <property type="entry name" value="PRK13009.1"/>
    <property type="match status" value="1"/>
</dbReference>
<dbReference type="PANTHER" id="PTHR43808">
    <property type="entry name" value="ACETYLORNITHINE DEACETYLASE"/>
    <property type="match status" value="1"/>
</dbReference>
<dbReference type="PANTHER" id="PTHR43808:SF31">
    <property type="entry name" value="N-ACETYL-L-CITRULLINE DEACETYLASE"/>
    <property type="match status" value="1"/>
</dbReference>
<dbReference type="Pfam" id="PF07687">
    <property type="entry name" value="M20_dimer"/>
    <property type="match status" value="1"/>
</dbReference>
<dbReference type="Pfam" id="PF01546">
    <property type="entry name" value="Peptidase_M20"/>
    <property type="match status" value="1"/>
</dbReference>
<dbReference type="SUPFAM" id="SSF55031">
    <property type="entry name" value="Bacterial exopeptidase dimerisation domain"/>
    <property type="match status" value="1"/>
</dbReference>
<dbReference type="SUPFAM" id="SSF53187">
    <property type="entry name" value="Zn-dependent exopeptidases"/>
    <property type="match status" value="1"/>
</dbReference>
<dbReference type="PROSITE" id="PS00758">
    <property type="entry name" value="ARGE_DAPE_CPG2_1"/>
    <property type="match status" value="1"/>
</dbReference>
<dbReference type="PROSITE" id="PS00759">
    <property type="entry name" value="ARGE_DAPE_CPG2_2"/>
    <property type="match status" value="1"/>
</dbReference>
<keyword id="KW-0028">Amino-acid biosynthesis</keyword>
<keyword id="KW-0170">Cobalt</keyword>
<keyword id="KW-0220">Diaminopimelate biosynthesis</keyword>
<keyword id="KW-0378">Hydrolase</keyword>
<keyword id="KW-0457">Lysine biosynthesis</keyword>
<keyword id="KW-0479">Metal-binding</keyword>
<keyword id="KW-0862">Zinc</keyword>
<reference key="1">
    <citation type="submission" date="2007-07" db="EMBL/GenBank/DDBJ databases">
        <title>Complete genome sequence of Campylobacter jejuni subsp doylei 269.97 isolated from human blood.</title>
        <authorList>
            <person name="Fouts D.E."/>
            <person name="Mongodin E.F."/>
            <person name="Puiu D."/>
            <person name="Sebastian Y."/>
            <person name="Miller W.G."/>
            <person name="Mandrell R.E."/>
            <person name="Lastovica A.J."/>
            <person name="Nelson K.E."/>
        </authorList>
    </citation>
    <scope>NUCLEOTIDE SEQUENCE [LARGE SCALE GENOMIC DNA]</scope>
    <source>
        <strain>ATCC BAA-1458 / RM4099 / 269.97</strain>
    </source>
</reference>
<feature type="chain" id="PRO_0000375522" description="Succinyl-diaminopimelate desuccinylase">
    <location>
        <begin position="1"/>
        <end position="365"/>
    </location>
</feature>
<feature type="active site" evidence="1">
    <location>
        <position position="67"/>
    </location>
</feature>
<feature type="active site" description="Proton acceptor" evidence="1">
    <location>
        <position position="126"/>
    </location>
</feature>
<feature type="binding site" evidence="1">
    <location>
        <position position="65"/>
    </location>
    <ligand>
        <name>Zn(2+)</name>
        <dbReference type="ChEBI" id="CHEBI:29105"/>
        <label>1</label>
    </ligand>
</feature>
<feature type="binding site" evidence="1">
    <location>
        <position position="96"/>
    </location>
    <ligand>
        <name>Zn(2+)</name>
        <dbReference type="ChEBI" id="CHEBI:29105"/>
        <label>1</label>
    </ligand>
</feature>
<feature type="binding site" evidence="1">
    <location>
        <position position="96"/>
    </location>
    <ligand>
        <name>Zn(2+)</name>
        <dbReference type="ChEBI" id="CHEBI:29105"/>
        <label>2</label>
    </ligand>
</feature>
<feature type="binding site" evidence="1">
    <location>
        <position position="127"/>
    </location>
    <ligand>
        <name>Zn(2+)</name>
        <dbReference type="ChEBI" id="CHEBI:29105"/>
        <label>2</label>
    </ligand>
</feature>
<feature type="binding site" evidence="1">
    <location>
        <position position="155"/>
    </location>
    <ligand>
        <name>Zn(2+)</name>
        <dbReference type="ChEBI" id="CHEBI:29105"/>
        <label>1</label>
    </ligand>
</feature>
<feature type="binding site" evidence="1">
    <location>
        <position position="340"/>
    </location>
    <ligand>
        <name>Zn(2+)</name>
        <dbReference type="ChEBI" id="CHEBI:29105"/>
        <label>2</label>
    </ligand>
</feature>
<evidence type="ECO:0000255" key="1">
    <source>
        <dbReference type="HAMAP-Rule" id="MF_01690"/>
    </source>
</evidence>
<organism>
    <name type="scientific">Campylobacter jejuni subsp. doylei (strain ATCC BAA-1458 / RM4099 / 269.97)</name>
    <dbReference type="NCBI Taxonomy" id="360109"/>
    <lineage>
        <taxon>Bacteria</taxon>
        <taxon>Pseudomonadati</taxon>
        <taxon>Campylobacterota</taxon>
        <taxon>Epsilonproteobacteria</taxon>
        <taxon>Campylobacterales</taxon>
        <taxon>Campylobacteraceae</taxon>
        <taxon>Campylobacter</taxon>
    </lineage>
</organism>